<organism>
    <name type="scientific">Saccharomyces cerevisiae (strain ATCC 204508 / S288c)</name>
    <name type="common">Baker's yeast</name>
    <dbReference type="NCBI Taxonomy" id="559292"/>
    <lineage>
        <taxon>Eukaryota</taxon>
        <taxon>Fungi</taxon>
        <taxon>Dikarya</taxon>
        <taxon>Ascomycota</taxon>
        <taxon>Saccharomycotina</taxon>
        <taxon>Saccharomycetes</taxon>
        <taxon>Saccharomycetales</taxon>
        <taxon>Saccharomycetaceae</taxon>
        <taxon>Saccharomyces</taxon>
    </lineage>
</organism>
<protein>
    <recommendedName>
        <fullName>General transcriptional corepressor TUP1</fullName>
    </recommendedName>
    <alternativeName>
        <fullName>Flocculation suppressor protein</fullName>
    </alternativeName>
    <alternativeName>
        <fullName>Glucose repression regulatory protein TUP1</fullName>
    </alternativeName>
    <alternativeName>
        <fullName>Repressor AER2</fullName>
    </alternativeName>
</protein>
<comment type="function">
    <text evidence="2 3 4 5 7 11 12">Acts as a component of the CYC8-TUP1 corepressor complex which is involved in the repression of many genes in a wide variety of physiological processes including heme-regulated and catabolite repressed genes. May also be involved in the derepression of at least some target genes. The complex is recruited to target genes by interaction with DNA-bound transcriptional repressors, like MATALPHA2, MIG1, RFX1 and SKO1. The complex recruits histone deacetylases to produce a repressive chromatin structure, interacts with hypoacetylated N-terminal tails of histones H3 and H4 that have been programmed for repression by the action of histone deacetylases and interferes directly with the transcriptional machinery by associating with the RNA polymerase II mediator complex.</text>
</comment>
<comment type="subunit">
    <text evidence="2 3 4 6 8 13 14 15 16">Associates with CYC8/SSN6 to form the CYC8-TUP1 (or TUP1-SSN6) corepressor complex that is composed of 4 copies of TUP1 and one copy of CYC8. Interacts with histone H3, histone H4, MATALPHA2, RFX1, SKO1, PGD1, HDA1, HDA2, HOS1, HOS2 and RPD3.</text>
</comment>
<comment type="interaction">
    <interactant intactId="EBI-19654">
        <id>P16649</id>
    </interactant>
    <interactant intactId="EBI-18215">
        <id>P14922</id>
        <label>CYC8</label>
    </interactant>
    <organismsDiffer>false</organismsDiffer>
    <experiments>7</experiments>
</comment>
<comment type="interaction">
    <interactant intactId="EBI-19654">
        <id>P16649</id>
    </interactant>
    <interactant intactId="EBI-13268">
        <id>P40356</id>
        <label>PGD1</label>
    </interactant>
    <organismsDiffer>false</organismsDiffer>
    <experiments>3</experiments>
</comment>
<comment type="interaction">
    <interactant intactId="EBI-19654">
        <id>P16649</id>
    </interactant>
    <interactant intactId="EBI-15036">
        <id>P48743</id>
        <label>RFX1</label>
    </interactant>
    <organismsDiffer>false</organismsDiffer>
    <experiments>2</experiments>
</comment>
<comment type="interaction">
    <interactant intactId="EBI-19654">
        <id>P16649</id>
    </interactant>
    <interactant intactId="EBI-15864">
        <id>P32561</id>
        <label>RPD3</label>
    </interactant>
    <organismsDiffer>false</organismsDiffer>
    <experiments>2</experiments>
</comment>
<comment type="subcellular location">
    <subcellularLocation>
        <location evidence="9">Nucleus</location>
    </subcellularLocation>
</comment>
<comment type="miscellaneous">
    <text evidence="10">Present with 5840 molecules/cell in log phase SD medium.</text>
</comment>
<comment type="similarity">
    <text evidence="17">Belongs to the WD repeat TUP1 family.</text>
</comment>
<comment type="sequence caution" evidence="17">
    <conflict type="erroneous initiation">
        <sequence resource="EMBL-CDS" id="CAA34411"/>
    </conflict>
</comment>
<evidence type="ECO:0000256" key="1">
    <source>
        <dbReference type="SAM" id="MobiDB-lite"/>
    </source>
</evidence>
<evidence type="ECO:0000269" key="2">
    <source>
    </source>
</evidence>
<evidence type="ECO:0000269" key="3">
    <source>
    </source>
</evidence>
<evidence type="ECO:0000269" key="4">
    <source>
    </source>
</evidence>
<evidence type="ECO:0000269" key="5">
    <source>
    </source>
</evidence>
<evidence type="ECO:0000269" key="6">
    <source>
    </source>
</evidence>
<evidence type="ECO:0000269" key="7">
    <source>
    </source>
</evidence>
<evidence type="ECO:0000269" key="8">
    <source>
    </source>
</evidence>
<evidence type="ECO:0000269" key="9">
    <source>
    </source>
</evidence>
<evidence type="ECO:0000269" key="10">
    <source>
    </source>
</evidence>
<evidence type="ECO:0000269" key="11">
    <source>
    </source>
</evidence>
<evidence type="ECO:0000269" key="12">
    <source>
    </source>
</evidence>
<evidence type="ECO:0000269" key="13">
    <source>
    </source>
</evidence>
<evidence type="ECO:0000269" key="14">
    <source>
    </source>
</evidence>
<evidence type="ECO:0000269" key="15">
    <source>
    </source>
</evidence>
<evidence type="ECO:0000269" key="16">
    <source>
    </source>
</evidence>
<evidence type="ECO:0000305" key="17"/>
<evidence type="ECO:0007744" key="18">
    <source>
    </source>
</evidence>
<evidence type="ECO:0007829" key="19">
    <source>
        <dbReference type="PDB" id="1ERJ"/>
    </source>
</evidence>
<evidence type="ECO:0007829" key="20">
    <source>
        <dbReference type="PDB" id="3VP9"/>
    </source>
</evidence>
<sequence length="713" mass="78308">MTASVSNTQNKLNELLDAIRQEFLQVSQEANTYRLQNQKDYDFKMNQQLAEMQQIRNTVYELELTHRKMKDAYEEEIKHLKLGLEQRDHQIASLTVQQQRQQQQQQQVQQHLQQQQQQLAAASASVPVAQQPPATTSATATPAANTTTGSPSAFPVQASRPNLVGSQLPTTTLPVVSSNAQQQLPQQQLQQQQLQQQQPPPQVSVAPLSNTAINGSPTSKETTTLPSVKAPESTLKETEPENNNTSKINDTGSATTATTTTATETEIKPKEEDATPASLHQDHYLVPYNQRANHSKPIPPFLLDLDSQSVPDALKKQTNDYYILYNPALPREIDVELHKSLDHTSVVCCVKFSNDGEYLATGCNKTTQVYRVSDGSLVARLSDDSAANNHRNSITENNTTTSTDNNTMTTTTTTTITTTAMTSAAELAKDVENLNTSSSPSSDLYIRSVCFSPDGKFLATGAEDRLIRIWDIENRKIVMILQGHEQDIYSLDYFPSGDKLVSGSGDRTVRIWDLRTGQCSLTLSIEDGVTTVAVSPGDGKYIAAGSLDRAVRVWDSETGFLVERLDSENESGTGHKDSVYSVVFTRDGQSVVSGSLDRSVKLWNLQNANNKSDSKTPNSGTCEVTYIGHKDFVLSVATTQNDEYILSGSKDRGVLFWDKKSGNPLLMLQGHRNSVISVAVANGSPLGPEYNVFATGSGDCKARIWKYKKIAPN</sequence>
<proteinExistence type="evidence at protein level"/>
<accession>P16649</accession>
<accession>D6VR85</accession>
<accession>P17995</accession>
<accession>P18323</accession>
<gene>
    <name type="primary">TUP1</name>
    <name type="synonym">AAR1</name>
    <name type="synonym">AER2</name>
    <name type="synonym">AMM1</name>
    <name type="synonym">CYC9</name>
    <name type="synonym">FLK1</name>
    <name type="synonym">SFL2</name>
    <name type="synonym">UMR7</name>
    <name type="ordered locus">YCR084C</name>
    <name type="ORF">YCR84C</name>
</gene>
<reference key="1">
    <citation type="journal article" date="1990" name="Mol. Cell. Biol.">
        <title>Characterization of TUP1, a mediator of glucose repression in Saccharomyces cerevisiae.</title>
        <authorList>
            <person name="Williams F.E."/>
            <person name="Trumbly R.J."/>
        </authorList>
    </citation>
    <scope>NUCLEOTIDE SEQUENCE [GENOMIC DNA]</scope>
    <scope>FUNCTION</scope>
</reference>
<reference key="2">
    <citation type="journal article" date="1991" name="Gene">
        <title>A yeast protein with homology to the beta-subunit of G proteins is involved in control of heme-regulated and catabolite-repressed genes.</title>
        <authorList>
            <person name="Zhang M."/>
            <person name="Rosenblum-Vos L.S."/>
            <person name="Lowry C.V."/>
            <person name="Boakye K."/>
            <person name="Zitomer R.S."/>
        </authorList>
    </citation>
    <scope>NUCLEOTIDE SEQUENCE [GENOMIC DNA]</scope>
</reference>
<reference key="3">
    <citation type="journal article" date="1990" name="Gene">
        <title>Cloning of the yeast SFL2 gene: its disruption results in pleiotropic phenotypes characteristic for tup1 mutants.</title>
        <authorList>
            <person name="Fujita A."/>
            <person name="Matsumoto S."/>
            <person name="Kuhara S."/>
            <person name="Misumi Y."/>
            <person name="Kobayashi H."/>
        </authorList>
    </citation>
    <scope>NUCLEOTIDE SEQUENCE [GENOMIC DNA]</scope>
    <source>
        <strain>ATCC 44774 / DBY747</strain>
    </source>
</reference>
<reference key="4">
    <citation type="journal article" date="1992" name="Nature">
        <title>The complete DNA sequence of yeast chromosome III.</title>
        <authorList>
            <person name="Oliver S.G."/>
            <person name="van der Aart Q.J.M."/>
            <person name="Agostoni-Carbone M.L."/>
            <person name="Aigle M."/>
            <person name="Alberghina L."/>
            <person name="Alexandraki D."/>
            <person name="Antoine G."/>
            <person name="Anwar R."/>
            <person name="Ballesta J.P.G."/>
            <person name="Benit P."/>
            <person name="Berben G."/>
            <person name="Bergantino E."/>
            <person name="Biteau N."/>
            <person name="Bolle P.-A."/>
            <person name="Bolotin-Fukuhara M."/>
            <person name="Brown A."/>
            <person name="Brown A.J.P."/>
            <person name="Buhler J.-M."/>
            <person name="Carcano C."/>
            <person name="Carignani G."/>
            <person name="Cederberg H."/>
            <person name="Chanet R."/>
            <person name="Contreras R."/>
            <person name="Crouzet M."/>
            <person name="Daignan-Fornier B."/>
            <person name="Defoor E."/>
            <person name="Delgado M.D."/>
            <person name="Demolder J."/>
            <person name="Doira C."/>
            <person name="Dubois E."/>
            <person name="Dujon B."/>
            <person name="Duesterhoeft A."/>
            <person name="Erdmann D."/>
            <person name="Esteban M."/>
            <person name="Fabre F."/>
            <person name="Fairhead C."/>
            <person name="Faye G."/>
            <person name="Feldmann H."/>
            <person name="Fiers W."/>
            <person name="Francingues-Gaillard M.-C."/>
            <person name="Franco L."/>
            <person name="Frontali L."/>
            <person name="Fukuhara H."/>
            <person name="Fuller L.J."/>
            <person name="Galland P."/>
            <person name="Gent M.E."/>
            <person name="Gigot D."/>
            <person name="Gilliquet V."/>
            <person name="Glansdorff N."/>
            <person name="Goffeau A."/>
            <person name="Grenson M."/>
            <person name="Grisanti P."/>
            <person name="Grivell L.A."/>
            <person name="de Haan M."/>
            <person name="Haasemann M."/>
            <person name="Hatat D."/>
            <person name="Hoenicka J."/>
            <person name="Hegemann J.H."/>
            <person name="Herbert C.J."/>
            <person name="Hilger F."/>
            <person name="Hohmann S."/>
            <person name="Hollenberg C.P."/>
            <person name="Huse K."/>
            <person name="Iborra F."/>
            <person name="Indge K.J."/>
            <person name="Isono K."/>
            <person name="Jacq C."/>
            <person name="Jacquet M."/>
            <person name="James C.M."/>
            <person name="Jauniaux J.-C."/>
            <person name="Jia Y."/>
            <person name="Jimenez A."/>
            <person name="Kelly A."/>
            <person name="Kleinhans U."/>
            <person name="Kreisl P."/>
            <person name="Lanfranchi G."/>
            <person name="Lewis C."/>
            <person name="van der Linden C.G."/>
            <person name="Lucchini G."/>
            <person name="Lutzenkirchen K."/>
            <person name="Maat M.J."/>
            <person name="Mallet L."/>
            <person name="Mannhaupt G."/>
            <person name="Martegani E."/>
            <person name="Mathieu A."/>
            <person name="Maurer C.T.C."/>
            <person name="McConnell D."/>
            <person name="McKee R.A."/>
            <person name="Messenguy F."/>
            <person name="Mewes H.-W."/>
            <person name="Molemans F."/>
            <person name="Montague M.A."/>
            <person name="Muzi Falconi M."/>
            <person name="Navas L."/>
            <person name="Newlon C.S."/>
            <person name="Noone D."/>
            <person name="Pallier C."/>
            <person name="Panzeri L."/>
            <person name="Pearson B.M."/>
            <person name="Perea J."/>
            <person name="Philippsen P."/>
            <person name="Pierard A."/>
            <person name="Planta R.J."/>
            <person name="Plevani P."/>
            <person name="Poetsch B."/>
            <person name="Pohl F.M."/>
            <person name="Purnelle B."/>
            <person name="Ramezani Rad M."/>
            <person name="Rasmussen S.W."/>
            <person name="Raynal A."/>
            <person name="Remacha M.A."/>
            <person name="Richterich P."/>
            <person name="Roberts A.B."/>
            <person name="Rodriguez F."/>
            <person name="Sanz E."/>
            <person name="Schaaff-Gerstenschlaeger I."/>
            <person name="Scherens B."/>
            <person name="Schweitzer B."/>
            <person name="Shu Y."/>
            <person name="Skala J."/>
            <person name="Slonimski P.P."/>
            <person name="Sor F."/>
            <person name="Soustelle C."/>
            <person name="Spiegelberg R."/>
            <person name="Stateva L.I."/>
            <person name="Steensma H.Y."/>
            <person name="Steiner S."/>
            <person name="Thierry A."/>
            <person name="Thireos G."/>
            <person name="Tzermia M."/>
            <person name="Urrestarazu L.A."/>
            <person name="Valle G."/>
            <person name="Vetter I."/>
            <person name="van Vliet-Reedijk J.C."/>
            <person name="Voet M."/>
            <person name="Volckaert G."/>
            <person name="Vreken P."/>
            <person name="Wang H."/>
            <person name="Warmington J.R."/>
            <person name="von Wettstein D."/>
            <person name="Wicksteed B.L."/>
            <person name="Wilson C."/>
            <person name="Wurst H."/>
            <person name="Xu G."/>
            <person name="Yoshikawa A."/>
            <person name="Zimmermann F.K."/>
            <person name="Sgouros J.G."/>
        </authorList>
    </citation>
    <scope>NUCLEOTIDE SEQUENCE [LARGE SCALE GENOMIC DNA]</scope>
    <source>
        <strain>ATCC 204508 / S288c</strain>
    </source>
</reference>
<reference key="5">
    <citation type="journal article" date="2014" name="G3 (Bethesda)">
        <title>The reference genome sequence of Saccharomyces cerevisiae: Then and now.</title>
        <authorList>
            <person name="Engel S.R."/>
            <person name="Dietrich F.S."/>
            <person name="Fisk D.G."/>
            <person name="Binkley G."/>
            <person name="Balakrishnan R."/>
            <person name="Costanzo M.C."/>
            <person name="Dwight S.S."/>
            <person name="Hitz B.C."/>
            <person name="Karra K."/>
            <person name="Nash R.S."/>
            <person name="Weng S."/>
            <person name="Wong E.D."/>
            <person name="Lloyd P."/>
            <person name="Skrzypek M.S."/>
            <person name="Miyasato S.R."/>
            <person name="Simison M."/>
            <person name="Cherry J.M."/>
        </authorList>
    </citation>
    <scope>GENOME REANNOTATION</scope>
    <source>
        <strain>ATCC 204508 / S288c</strain>
    </source>
</reference>
<reference key="6">
    <citation type="journal article" date="1991" name="Gene">
        <title>The SFL2 (TUP1?) protein of Saccharomyces cerevisiae contains a repeating motif homologous to beta subunits of G proteins.</title>
        <authorList>
            <person name="Kearsley S."/>
        </authorList>
    </citation>
    <scope>SIMILARITY TO BETA SUBUNIT OF G-PROTEINS</scope>
</reference>
<reference key="7">
    <citation type="journal article" date="1994" name="Genes Dev.">
        <title>The WD repeats of Tup1 interact with the homeo domain protein alpha 2.</title>
        <authorList>
            <person name="Komachi K."/>
            <person name="Redd M.J."/>
            <person name="Johnson A.D."/>
        </authorList>
    </citation>
    <scope>INTERACTION WITH MATALPHA2</scope>
</reference>
<reference key="8">
    <citation type="journal article" date="1996" name="Genes Dev.">
        <title>Repression domain of the yeast global repressor Tup1 interacts directly with histones H3 and H4.</title>
        <authorList>
            <person name="Edmondson D.G."/>
            <person name="Smith M.M."/>
            <person name="Roth S.Y."/>
        </authorList>
    </citation>
    <scope>INTERACTION WITH HISTONE H3 AND HISTONE H4</scope>
</reference>
<reference key="9">
    <citation type="journal article" date="1996" name="Mol. Cell. Biol.">
        <title>The Cyc8 (Ssn6)-Tup1 corepressor complex is composed of one Cyc8 and four Tup1 subunits.</title>
        <authorList>
            <person name="Varanasi U.S."/>
            <person name="Klis M."/>
            <person name="Mikesell P.B."/>
            <person name="Trumbly R.J."/>
        </authorList>
    </citation>
    <scope>SUBUNIT</scope>
</reference>
<reference key="10">
    <citation type="journal article" date="1998" name="Cell">
        <title>The DNA replication and damage checkpoint pathways induce transcription by inhibition of the Crt1 repressor.</title>
        <authorList>
            <person name="Huang M."/>
            <person name="Zhou Z."/>
            <person name="Elledge S.J."/>
        </authorList>
    </citation>
    <scope>INTERACTION WITH RFX1</scope>
</reference>
<reference key="11">
    <citation type="journal article" date="2000" name="Genes Dev.">
        <title>Ssn6-Tup1 interacts with class I histone deacetylases required for repression.</title>
        <authorList>
            <person name="Watson A.D."/>
            <person name="Edmondson D.G."/>
            <person name="Bone J.R."/>
            <person name="Mukai Y."/>
            <person name="Yu Y."/>
            <person name="Du W."/>
            <person name="Stillman D.J."/>
            <person name="Roth S.Y."/>
        </authorList>
    </citation>
    <scope>INTERACTION WITH CYC8 AND RPD3</scope>
    <scope>FUNCTION OF THE CYC8-TUP1 COMPLEX</scope>
</reference>
<reference key="12">
    <citation type="journal article" date="2000" name="J. Biol. Chem.">
        <title>Hrs1/Med3 is a Cyc8-Tup1 corepressor target in the RNA polymerase II holoenzyme.</title>
        <authorList>
            <person name="Papamichos-Chronakis M."/>
            <person name="Conlan R.S."/>
            <person name="Gounalaki N."/>
            <person name="Copf T."/>
            <person name="Tzamarias D."/>
        </authorList>
    </citation>
    <scope>INTERACTION WITH PGD1</scope>
    <scope>FUNCTION OF THE CYC8-TUP1 COMPLEX</scope>
</reference>
<reference key="13">
    <citation type="journal article" date="2001" name="EMBO J.">
        <title>Regulation of the Sko1 transcriptional repressor by the Hog1 MAP kinase in response to osmotic stress.</title>
        <authorList>
            <person name="Proft M."/>
            <person name="Pascual-Ahuir A."/>
            <person name="de Nadal E."/>
            <person name="Arino J."/>
            <person name="Serrano R."/>
            <person name="Posas F."/>
        </authorList>
    </citation>
    <scope>FUNCTION OF THE CYC8-TUP1 COMPLEX</scope>
</reference>
<reference key="14">
    <citation type="journal article" date="2001" name="J. Biol. Chem.">
        <title>Multiple levels of control regulate the yeast cAMP-response element-binding protein repressor Sko1p in response to stress.</title>
        <authorList>
            <person name="Pascual-Ahuir A."/>
            <person name="Posas F."/>
            <person name="Serrano R."/>
            <person name="Proft M."/>
        </authorList>
    </citation>
    <scope>INTERACTION WITH SKO1</scope>
</reference>
<reference key="15">
    <citation type="journal article" date="2001" name="Mol. Cell">
        <title>TUP1 utilizes histone H3/H2B-specific HDA1 deacetylase to repress gene activity in yeast.</title>
        <authorList>
            <person name="Wu J."/>
            <person name="Suka N."/>
            <person name="Carlson M."/>
            <person name="Grunstein M."/>
        </authorList>
    </citation>
    <scope>INTERACTION WITH HDA1 AND HDA2</scope>
    <scope>FUNCTION OF THE CYC8-TUP1 COMPLEX</scope>
</reference>
<reference key="16">
    <citation type="journal article" date="2002" name="Mol. Cell. Biol.">
        <title>Histone-dependent association of Tup1-Ssn6 with repressed genes in vivo.</title>
        <authorList>
            <person name="Davie J.K."/>
            <person name="Trumbly R.J."/>
            <person name="Dent S.Y."/>
        </authorList>
    </citation>
    <scope>FUNCTION OF THE CYC8-TUP1 COMPLEX</scope>
</reference>
<reference key="17">
    <citation type="journal article" date="2003" name="Eukaryot. Cell">
        <title>Recruitment of Tup1-Ssn6 by yeast hypoxic genes and chromatin-independent exclusion of TATA binding protein.</title>
        <authorList>
            <person name="Mennella T.A."/>
            <person name="Klinkenberg L.G."/>
            <person name="Zitomer R.S."/>
        </authorList>
    </citation>
    <scope>FUNCTION OF THE CYC8-TUP1 COMPLEX</scope>
</reference>
<reference key="18">
    <citation type="journal article" date="2003" name="J. Biol. Chem.">
        <title>Tup1-Ssn6 interacts with multiple class I histone deacetylases in vivo.</title>
        <authorList>
            <person name="Davie J.K."/>
            <person name="Edmondson D.G."/>
            <person name="Coco C.B."/>
            <person name="Dent S.Y."/>
        </authorList>
    </citation>
    <scope>INTERACTION WITH HOS1; HOS2 AND RPD3</scope>
</reference>
<reference key="19">
    <citation type="journal article" date="2003" name="Nature">
        <title>Global analysis of protein localization in budding yeast.</title>
        <authorList>
            <person name="Huh W.-K."/>
            <person name="Falvo J.V."/>
            <person name="Gerke L.C."/>
            <person name="Carroll A.S."/>
            <person name="Howson R.W."/>
            <person name="Weissman J.S."/>
            <person name="O'Shea E.K."/>
        </authorList>
    </citation>
    <scope>SUBCELLULAR LOCATION [LARGE SCALE ANALYSIS]</scope>
</reference>
<reference key="20">
    <citation type="journal article" date="2003" name="Nature">
        <title>Global analysis of protein expression in yeast.</title>
        <authorList>
            <person name="Ghaemmaghami S."/>
            <person name="Huh W.-K."/>
            <person name="Bower K."/>
            <person name="Howson R.W."/>
            <person name="Belle A."/>
            <person name="Dephoure N."/>
            <person name="O'Shea E.K."/>
            <person name="Weissman J.S."/>
        </authorList>
    </citation>
    <scope>LEVEL OF PROTEIN EXPRESSION [LARGE SCALE ANALYSIS]</scope>
</reference>
<reference key="21">
    <citation type="journal article" date="2007" name="J. Proteome Res.">
        <title>Large-scale phosphorylation analysis of alpha-factor-arrested Saccharomyces cerevisiae.</title>
        <authorList>
            <person name="Li X."/>
            <person name="Gerber S.A."/>
            <person name="Rudner A.D."/>
            <person name="Beausoleil S.A."/>
            <person name="Haas W."/>
            <person name="Villen J."/>
            <person name="Elias J.E."/>
            <person name="Gygi S.P."/>
        </authorList>
    </citation>
    <scope>IDENTIFICATION BY MASS SPECTROMETRY [LARGE SCALE ANALYSIS]</scope>
    <source>
        <strain>ADR376</strain>
    </source>
</reference>
<reference key="22">
    <citation type="journal article" date="2008" name="Mol. Cell. Proteomics">
        <title>A multidimensional chromatography technology for in-depth phosphoproteome analysis.</title>
        <authorList>
            <person name="Albuquerque C.P."/>
            <person name="Smolka M.B."/>
            <person name="Payne S.H."/>
            <person name="Bafna V."/>
            <person name="Eng J."/>
            <person name="Zhou H."/>
        </authorList>
    </citation>
    <scope>IDENTIFICATION BY MASS SPECTROMETRY [LARGE SCALE ANALYSIS]</scope>
</reference>
<reference key="23">
    <citation type="journal article" date="2009" name="Science">
        <title>Global analysis of Cdk1 substrate phosphorylation sites provides insights into evolution.</title>
        <authorList>
            <person name="Holt L.J."/>
            <person name="Tuch B.B."/>
            <person name="Villen J."/>
            <person name="Johnson A.D."/>
            <person name="Gygi S.P."/>
            <person name="Morgan D.O."/>
        </authorList>
    </citation>
    <scope>PHOSPHORYLATION [LARGE SCALE ANALYSIS] AT SER-439</scope>
    <scope>IDENTIFICATION BY MASS SPECTROMETRY [LARGE SCALE ANALYSIS]</scope>
</reference>
<reference key="24">
    <citation type="journal article" date="2012" name="Proc. Natl. Acad. Sci. U.S.A.">
        <title>N-terminal acetylome analyses and functional insights of the N-terminal acetyltransferase NatB.</title>
        <authorList>
            <person name="Van Damme P."/>
            <person name="Lasa M."/>
            <person name="Polevoda B."/>
            <person name="Gazquez C."/>
            <person name="Elosegui-Artola A."/>
            <person name="Kim D.S."/>
            <person name="De Juan-Pardo E."/>
            <person name="Demeyer K."/>
            <person name="Hole K."/>
            <person name="Larrea E."/>
            <person name="Timmerman E."/>
            <person name="Prieto J."/>
            <person name="Arnesen T."/>
            <person name="Sherman F."/>
            <person name="Gevaert K."/>
            <person name="Aldabe R."/>
        </authorList>
    </citation>
    <scope>IDENTIFICATION BY MASS SPECTROMETRY [LARGE SCALE ANALYSIS]</scope>
</reference>
<reference key="25">
    <citation type="journal article" date="2000" name="EMBO J.">
        <title>Structure of the C-terminal domain of Tup1, a corepressor of transcription in yeast.</title>
        <authorList>
            <person name="Sprague E.R."/>
            <person name="Redd M.J."/>
            <person name="Johnson A.D."/>
            <person name="Wolberger C."/>
        </authorList>
    </citation>
    <scope>X-RAY CRYSTALLOGRAPHY (2.3 ANGSTROMS) OF 282-713</scope>
</reference>
<dbReference type="EMBL" id="M31733">
    <property type="protein sequence ID" value="AAA35182.1"/>
    <property type="molecule type" value="Genomic_DNA"/>
</dbReference>
<dbReference type="EMBL" id="M35861">
    <property type="protein sequence ID" value="AAA34413.1"/>
    <property type="molecule type" value="Genomic_DNA"/>
</dbReference>
<dbReference type="EMBL" id="X16365">
    <property type="protein sequence ID" value="CAA34411.1"/>
    <property type="status" value="ALT_INIT"/>
    <property type="molecule type" value="Genomic_DNA"/>
</dbReference>
<dbReference type="EMBL" id="X59720">
    <property type="protein sequence ID" value="CAA42259.1"/>
    <property type="molecule type" value="Genomic_DNA"/>
</dbReference>
<dbReference type="EMBL" id="BK006937">
    <property type="protein sequence ID" value="DAA07554.1"/>
    <property type="molecule type" value="Genomic_DNA"/>
</dbReference>
<dbReference type="PIR" id="JN0133">
    <property type="entry name" value="JN0133"/>
</dbReference>
<dbReference type="RefSeq" id="NP_010007.1">
    <property type="nucleotide sequence ID" value="NM_001178790.1"/>
</dbReference>
<dbReference type="PDB" id="1ERJ">
    <property type="method" value="X-ray"/>
    <property type="resolution" value="2.30 A"/>
    <property type="chains" value="A/B/C=282-388, A/B/C=432-713"/>
</dbReference>
<dbReference type="PDB" id="3VP8">
    <property type="method" value="X-ray"/>
    <property type="resolution" value="1.91 A"/>
    <property type="chains" value="A/B/C/D=1-92"/>
</dbReference>
<dbReference type="PDB" id="3VP9">
    <property type="method" value="X-ray"/>
    <property type="resolution" value="1.80 A"/>
    <property type="chains" value="A/B=1-92"/>
</dbReference>
<dbReference type="PDBsum" id="1ERJ"/>
<dbReference type="PDBsum" id="3VP8"/>
<dbReference type="PDBsum" id="3VP9"/>
<dbReference type="SMR" id="P16649"/>
<dbReference type="BioGRID" id="31057">
    <property type="interactions" value="135"/>
</dbReference>
<dbReference type="ComplexPortal" id="CPX-1663">
    <property type="entry name" value="CYC8-TUP1 corepressor complex"/>
</dbReference>
<dbReference type="DIP" id="DIP-512N"/>
<dbReference type="FunCoup" id="P16649">
    <property type="interactions" value="2906"/>
</dbReference>
<dbReference type="IntAct" id="P16649">
    <property type="interactions" value="32"/>
</dbReference>
<dbReference type="MINT" id="P16649"/>
<dbReference type="STRING" id="4932.YCR084C"/>
<dbReference type="GlyGen" id="P16649">
    <property type="glycosylation" value="4 sites, 1 O-linked glycan (3 sites)"/>
</dbReference>
<dbReference type="iPTMnet" id="P16649"/>
<dbReference type="PaxDb" id="4932-YCR084C"/>
<dbReference type="PeptideAtlas" id="P16649"/>
<dbReference type="EnsemblFungi" id="YCR084C_mRNA">
    <property type="protein sequence ID" value="YCR084C"/>
    <property type="gene ID" value="YCR084C"/>
</dbReference>
<dbReference type="GeneID" id="850445"/>
<dbReference type="KEGG" id="sce:YCR084C"/>
<dbReference type="AGR" id="SGD:S000000680"/>
<dbReference type="SGD" id="S000000680">
    <property type="gene designation" value="TUP1"/>
</dbReference>
<dbReference type="VEuPathDB" id="FungiDB:YCR084C"/>
<dbReference type="eggNOG" id="KOG0266">
    <property type="taxonomic scope" value="Eukaryota"/>
</dbReference>
<dbReference type="GeneTree" id="ENSGT00960000189238"/>
<dbReference type="HOGENOM" id="CLU_000288_57_23_1"/>
<dbReference type="InParanoid" id="P16649"/>
<dbReference type="OMA" id="HYLVPYN"/>
<dbReference type="OrthoDB" id="17410at2759"/>
<dbReference type="BioCyc" id="YEAST:G3O-29380-MONOMER"/>
<dbReference type="BioGRID-ORCS" id="850445">
    <property type="hits" value="7 hits in 10 CRISPR screens"/>
</dbReference>
<dbReference type="EvolutionaryTrace" id="P16649"/>
<dbReference type="PRO" id="PR:P16649"/>
<dbReference type="Proteomes" id="UP000002311">
    <property type="component" value="Chromosome III"/>
</dbReference>
<dbReference type="RNAct" id="P16649">
    <property type="molecule type" value="protein"/>
</dbReference>
<dbReference type="GO" id="GO:0005634">
    <property type="term" value="C:nucleus"/>
    <property type="evidence" value="ECO:0000314"/>
    <property type="project" value="SGD"/>
</dbReference>
<dbReference type="GO" id="GO:0019005">
    <property type="term" value="C:SCF ubiquitin ligase complex"/>
    <property type="evidence" value="ECO:0000318"/>
    <property type="project" value="GO_Central"/>
</dbReference>
<dbReference type="GO" id="GO:0017053">
    <property type="term" value="C:transcription repressor complex"/>
    <property type="evidence" value="ECO:0000353"/>
    <property type="project" value="ComplexPortal"/>
</dbReference>
<dbReference type="GO" id="GO:0042393">
    <property type="term" value="F:histone binding"/>
    <property type="evidence" value="ECO:0000314"/>
    <property type="project" value="SGD"/>
</dbReference>
<dbReference type="GO" id="GO:0042826">
    <property type="term" value="F:histone deacetylase binding"/>
    <property type="evidence" value="ECO:0000314"/>
    <property type="project" value="SGD"/>
</dbReference>
<dbReference type="GO" id="GO:0036033">
    <property type="term" value="F:mediator complex binding"/>
    <property type="evidence" value="ECO:0000314"/>
    <property type="project" value="SGD"/>
</dbReference>
<dbReference type="GO" id="GO:0080025">
    <property type="term" value="F:phosphatidylinositol-3,5-bisphosphate binding"/>
    <property type="evidence" value="ECO:0000314"/>
    <property type="project" value="SGD"/>
</dbReference>
<dbReference type="GO" id="GO:0003714">
    <property type="term" value="F:transcription corepressor activity"/>
    <property type="evidence" value="ECO:0000314"/>
    <property type="project" value="SGD"/>
</dbReference>
<dbReference type="GO" id="GO:1990756">
    <property type="term" value="F:ubiquitin-like ligase-substrate adaptor activity"/>
    <property type="evidence" value="ECO:0000318"/>
    <property type="project" value="GO_Central"/>
</dbReference>
<dbReference type="GO" id="GO:0006974">
    <property type="term" value="P:DNA damage response"/>
    <property type="evidence" value="ECO:0000315"/>
    <property type="project" value="SGD"/>
</dbReference>
<dbReference type="GO" id="GO:0006972">
    <property type="term" value="P:hyperosmotic response"/>
    <property type="evidence" value="ECO:0000314"/>
    <property type="project" value="ComplexPortal"/>
</dbReference>
<dbReference type="GO" id="GO:0000278">
    <property type="term" value="P:mitotic cell cycle"/>
    <property type="evidence" value="ECO:0000315"/>
    <property type="project" value="SGD"/>
</dbReference>
<dbReference type="GO" id="GO:2000879">
    <property type="term" value="P:negative regulation of dipeptide transport"/>
    <property type="evidence" value="ECO:0000315"/>
    <property type="project" value="SGD"/>
</dbReference>
<dbReference type="GO" id="GO:0045892">
    <property type="term" value="P:negative regulation of DNA-templated transcription"/>
    <property type="evidence" value="ECO:0000314"/>
    <property type="project" value="ComplexPortal"/>
</dbReference>
<dbReference type="GO" id="GO:0000122">
    <property type="term" value="P:negative regulation of transcription by RNA polymerase II"/>
    <property type="evidence" value="ECO:0000315"/>
    <property type="project" value="SGD"/>
</dbReference>
<dbReference type="GO" id="GO:0045944">
    <property type="term" value="P:positive regulation of transcription by RNA polymerase II"/>
    <property type="evidence" value="ECO:0000315"/>
    <property type="project" value="SGD"/>
</dbReference>
<dbReference type="GO" id="GO:0000209">
    <property type="term" value="P:protein polyubiquitination"/>
    <property type="evidence" value="ECO:0000318"/>
    <property type="project" value="GO_Central"/>
</dbReference>
<dbReference type="GO" id="GO:0042304">
    <property type="term" value="P:regulation of fatty acid biosynthetic process"/>
    <property type="evidence" value="ECO:0000315"/>
    <property type="project" value="SGD"/>
</dbReference>
<dbReference type="GO" id="GO:0006357">
    <property type="term" value="P:regulation of transcription by RNA polymerase II"/>
    <property type="evidence" value="ECO:0000315"/>
    <property type="project" value="SGD"/>
</dbReference>
<dbReference type="CDD" id="cd00200">
    <property type="entry name" value="WD40"/>
    <property type="match status" value="1"/>
</dbReference>
<dbReference type="FunFam" id="1.20.5.340:FF:000043">
    <property type="entry name" value="Transcriptional repressor TUP1"/>
    <property type="match status" value="1"/>
</dbReference>
<dbReference type="FunFam" id="2.130.10.10:FF:000954">
    <property type="entry name" value="Tup1p"/>
    <property type="match status" value="1"/>
</dbReference>
<dbReference type="Gene3D" id="1.20.5.340">
    <property type="match status" value="1"/>
</dbReference>
<dbReference type="Gene3D" id="2.130.10.10">
    <property type="entry name" value="YVTN repeat-like/Quinoprotein amine dehydrogenase"/>
    <property type="match status" value="2"/>
</dbReference>
<dbReference type="InterPro" id="IPR020472">
    <property type="entry name" value="G-protein_beta_WD-40_rep"/>
</dbReference>
<dbReference type="InterPro" id="IPR013890">
    <property type="entry name" value="Tscrpt_rep_Tup1_N"/>
</dbReference>
<dbReference type="InterPro" id="IPR015943">
    <property type="entry name" value="WD40/YVTN_repeat-like_dom_sf"/>
</dbReference>
<dbReference type="InterPro" id="IPR019775">
    <property type="entry name" value="WD40_repeat_CS"/>
</dbReference>
<dbReference type="InterPro" id="IPR036322">
    <property type="entry name" value="WD40_repeat_dom_sf"/>
</dbReference>
<dbReference type="InterPro" id="IPR001680">
    <property type="entry name" value="WD40_rpt"/>
</dbReference>
<dbReference type="PANTHER" id="PTHR19848:SF8">
    <property type="entry name" value="F-BOX AND WD REPEAT DOMAIN CONTAINING 7"/>
    <property type="match status" value="1"/>
</dbReference>
<dbReference type="PANTHER" id="PTHR19848">
    <property type="entry name" value="WD40 REPEAT PROTEIN"/>
    <property type="match status" value="1"/>
</dbReference>
<dbReference type="Pfam" id="PF08581">
    <property type="entry name" value="Tup_N"/>
    <property type="match status" value="1"/>
</dbReference>
<dbReference type="Pfam" id="PF00400">
    <property type="entry name" value="WD40"/>
    <property type="match status" value="7"/>
</dbReference>
<dbReference type="PRINTS" id="PR00320">
    <property type="entry name" value="GPROTEINBRPT"/>
</dbReference>
<dbReference type="SMART" id="SM00320">
    <property type="entry name" value="WD40"/>
    <property type="match status" value="7"/>
</dbReference>
<dbReference type="SUPFAM" id="SSF50978">
    <property type="entry name" value="WD40 repeat-like"/>
    <property type="match status" value="1"/>
</dbReference>
<dbReference type="PROSITE" id="PS00678">
    <property type="entry name" value="WD_REPEATS_1"/>
    <property type="match status" value="4"/>
</dbReference>
<dbReference type="PROSITE" id="PS50082">
    <property type="entry name" value="WD_REPEATS_2"/>
    <property type="match status" value="5"/>
</dbReference>
<dbReference type="PROSITE" id="PS50294">
    <property type="entry name" value="WD_REPEATS_REGION"/>
    <property type="match status" value="1"/>
</dbReference>
<name>TUP1_YEAST</name>
<feature type="chain" id="PRO_0000051312" description="General transcriptional corepressor TUP1">
    <location>
        <begin position="1"/>
        <end position="713"/>
    </location>
</feature>
<feature type="repeat" description="WD 1">
    <location>
        <begin position="342"/>
        <end position="371"/>
    </location>
</feature>
<feature type="repeat" description="WD 2">
    <location>
        <begin position="441"/>
        <end position="471"/>
    </location>
</feature>
<feature type="repeat" description="WD 3">
    <location>
        <begin position="483"/>
        <end position="513"/>
    </location>
</feature>
<feature type="repeat" description="WD 4">
    <location>
        <begin position="524"/>
        <end position="555"/>
    </location>
</feature>
<feature type="repeat" description="WD 5">
    <location>
        <begin position="574"/>
        <end position="604"/>
    </location>
</feature>
<feature type="repeat" description="WD 6">
    <location>
        <begin position="628"/>
        <end position="658"/>
    </location>
</feature>
<feature type="repeat" description="WD 7">
    <location>
        <begin position="670"/>
        <end position="706"/>
    </location>
</feature>
<feature type="region of interest" description="Disordered" evidence="1">
    <location>
        <begin position="124"/>
        <end position="278"/>
    </location>
</feature>
<feature type="region of interest" description="Disordered" evidence="1">
    <location>
        <begin position="387"/>
        <end position="409"/>
    </location>
</feature>
<feature type="compositionally biased region" description="Low complexity" evidence="1">
    <location>
        <begin position="124"/>
        <end position="153"/>
    </location>
</feature>
<feature type="compositionally biased region" description="Polar residues" evidence="1">
    <location>
        <begin position="164"/>
        <end position="180"/>
    </location>
</feature>
<feature type="compositionally biased region" description="Low complexity" evidence="1">
    <location>
        <begin position="181"/>
        <end position="197"/>
    </location>
</feature>
<feature type="compositionally biased region" description="Polar residues" evidence="1">
    <location>
        <begin position="207"/>
        <end position="226"/>
    </location>
</feature>
<feature type="compositionally biased region" description="Polar residues" evidence="1">
    <location>
        <begin position="241"/>
        <end position="253"/>
    </location>
</feature>
<feature type="compositionally biased region" description="Low complexity" evidence="1">
    <location>
        <begin position="254"/>
        <end position="264"/>
    </location>
</feature>
<feature type="compositionally biased region" description="Low complexity" evidence="1">
    <location>
        <begin position="392"/>
        <end position="409"/>
    </location>
</feature>
<feature type="modified residue" description="Phosphoserine" evidence="18">
    <location>
        <position position="439"/>
    </location>
</feature>
<feature type="sequence conflict" description="In Ref. 1; AAA35182." evidence="17" ref="1">
    <original>E</original>
    <variation>A</variation>
    <location>
        <position position="75"/>
    </location>
</feature>
<feature type="sequence conflict" description="In Ref. 1; AAA35182." evidence="17" ref="1">
    <original>R</original>
    <variation>Q</variation>
    <location>
        <position position="100"/>
    </location>
</feature>
<feature type="sequence conflict" description="In Ref. 1; AAA35182 and 2; AAA34413." evidence="17" ref="1 2">
    <original>P</original>
    <variation>S</variation>
    <location>
        <position position="685"/>
    </location>
</feature>
<feature type="turn" evidence="20">
    <location>
        <begin position="19"/>
        <end position="26"/>
    </location>
</feature>
<feature type="helix" evidence="20">
    <location>
        <begin position="27"/>
        <end position="84"/>
    </location>
</feature>
<feature type="strand" evidence="19">
    <location>
        <begin position="290"/>
        <end position="292"/>
    </location>
</feature>
<feature type="helix" evidence="19">
    <location>
        <begin position="300"/>
        <end position="303"/>
    </location>
</feature>
<feature type="strand" evidence="19">
    <location>
        <begin position="307"/>
        <end position="310"/>
    </location>
</feature>
<feature type="strand" evidence="19">
    <location>
        <begin position="314"/>
        <end position="317"/>
    </location>
</feature>
<feature type="strand" evidence="19">
    <location>
        <begin position="322"/>
        <end position="325"/>
    </location>
</feature>
<feature type="strand" evidence="19">
    <location>
        <begin position="333"/>
        <end position="342"/>
    </location>
</feature>
<feature type="strand" evidence="19">
    <location>
        <begin position="349"/>
        <end position="352"/>
    </location>
</feature>
<feature type="strand" evidence="19">
    <location>
        <begin position="356"/>
        <end position="362"/>
    </location>
</feature>
<feature type="strand" evidence="19">
    <location>
        <begin position="367"/>
        <end position="371"/>
    </location>
</feature>
<feature type="turn" evidence="19">
    <location>
        <begin position="372"/>
        <end position="374"/>
    </location>
</feature>
<feature type="strand" evidence="19">
    <location>
        <begin position="377"/>
        <end position="381"/>
    </location>
</feature>
<feature type="strand" evidence="19">
    <location>
        <begin position="445"/>
        <end position="451"/>
    </location>
</feature>
<feature type="strand" evidence="19">
    <location>
        <begin position="455"/>
        <end position="462"/>
    </location>
</feature>
<feature type="strand" evidence="19">
    <location>
        <begin position="467"/>
        <end position="471"/>
    </location>
</feature>
<feature type="turn" evidence="19">
    <location>
        <begin position="472"/>
        <end position="475"/>
    </location>
</feature>
<feature type="strand" evidence="19">
    <location>
        <begin position="476"/>
        <end position="481"/>
    </location>
</feature>
<feature type="strand" evidence="19">
    <location>
        <begin position="488"/>
        <end position="493"/>
    </location>
</feature>
<feature type="strand" evidence="19">
    <location>
        <begin position="497"/>
        <end position="504"/>
    </location>
</feature>
<feature type="strand" evidence="19">
    <location>
        <begin position="507"/>
        <end position="513"/>
    </location>
</feature>
<feature type="turn" evidence="19">
    <location>
        <begin position="514"/>
        <end position="517"/>
    </location>
</feature>
<feature type="strand" evidence="19">
    <location>
        <begin position="518"/>
        <end position="524"/>
    </location>
</feature>
<feature type="strand" evidence="19">
    <location>
        <begin position="529"/>
        <end position="534"/>
    </location>
</feature>
<feature type="strand" evidence="19">
    <location>
        <begin position="541"/>
        <end position="546"/>
    </location>
</feature>
<feature type="strand" evidence="19">
    <location>
        <begin position="551"/>
        <end position="555"/>
    </location>
</feature>
<feature type="turn" evidence="19">
    <location>
        <begin position="556"/>
        <end position="558"/>
    </location>
</feature>
<feature type="strand" evidence="19">
    <location>
        <begin position="561"/>
        <end position="565"/>
    </location>
</feature>
<feature type="strand" evidence="19">
    <location>
        <begin position="579"/>
        <end position="584"/>
    </location>
</feature>
<feature type="strand" evidence="19">
    <location>
        <begin position="588"/>
        <end position="595"/>
    </location>
</feature>
<feature type="strand" evidence="19">
    <location>
        <begin position="598"/>
        <end position="604"/>
    </location>
</feature>
<feature type="strand" evidence="19">
    <location>
        <begin position="622"/>
        <end position="627"/>
    </location>
</feature>
<feature type="strand" evidence="19">
    <location>
        <begin position="633"/>
        <end position="638"/>
    </location>
</feature>
<feature type="helix" evidence="19">
    <location>
        <begin position="640"/>
        <end position="642"/>
    </location>
</feature>
<feature type="strand" evidence="19">
    <location>
        <begin position="644"/>
        <end position="649"/>
    </location>
</feature>
<feature type="strand" evidence="19">
    <location>
        <begin position="652"/>
        <end position="658"/>
    </location>
</feature>
<feature type="turn" evidence="19">
    <location>
        <begin position="659"/>
        <end position="661"/>
    </location>
</feature>
<feature type="strand" evidence="19">
    <location>
        <begin position="664"/>
        <end position="669"/>
    </location>
</feature>
<feature type="strand" evidence="19">
    <location>
        <begin position="675"/>
        <end position="680"/>
    </location>
</feature>
<feature type="strand" evidence="19">
    <location>
        <begin position="691"/>
        <end position="697"/>
    </location>
</feature>
<feature type="strand" evidence="19">
    <location>
        <begin position="700"/>
        <end position="709"/>
    </location>
</feature>
<keyword id="KW-0002">3D-structure</keyword>
<keyword id="KW-0539">Nucleus</keyword>
<keyword id="KW-0597">Phosphoprotein</keyword>
<keyword id="KW-1185">Reference proteome</keyword>
<keyword id="KW-0677">Repeat</keyword>
<keyword id="KW-0678">Repressor</keyword>
<keyword id="KW-0804">Transcription</keyword>
<keyword id="KW-0805">Transcription regulation</keyword>
<keyword id="KW-0853">WD repeat</keyword>